<gene>
    <name type="primary">Atp1a2</name>
</gene>
<name>AT1A2_RAT</name>
<sequence length="1020" mass="112217">MGRGAGREYSPAATTAENGGGKKKQKEKELDELKKEVAMDDHKLSLDELGRKYQVDLSKGLTNQRAQDILARDGPNALTPPPTTPEWVKFCRQLFGGFSILLWIGALLCFLAYGILAAMEDEPSNDNLYLGIVLAAVVIVTGCFSYYQEAKSSKIMDSFKNMVPQQALVIREGEKMQINAEEVVVGDLVEVKGGDRVPADLRIISSHGCKVDNSSLTGESEPQTRSPEFTHENPLETRNICFFSTNCVEGTARGIVIATGDRTVMGRIATLASGLEVGQTPIAMEIEHFIQLITGVAVFLGVSFFVLSLILGYSWLEAVIFLIGIIVANVPEGLLATVTVCLTLTAKRMARKNCLVKNLEAVETLGSTSTICSDKTGTLTQNRMTVAHMWFDNQIHEADTTEDQSGATFDKRSPTWTALSRIAGLCNRAVFKAGQENISVSKRDTAGDASESALLKCIELSCGSVRKMRDRNPKVAEIPFNSTNKYQLSIHEREDSPQSHVLVMKGAPERILDRCSTILVQGKEIPLDKEMQDAFQNAYMELGGLGERVLGFCQLNLPSGKFPRGFKFDTDELNFPTEKLCFVGLMSMIDPPRAAVPDAVGKCRSAGIKVIMVTGDHPITAKAIAKGVGIISEGNETVEDIAARLNIPVSQVNPREAKACVVHGSDLKDMTSEQLDEILRDHTEIVFARTSPQQKLIIVEGCQRQGAIVAVTGDGVNDSPALKKADIGIAMGISGSDVSKQAADMILLDDNFASIVTGVEEGRLIFDNLKKSIAYTLTSNIPEITPFLLFIIANIPLPLGTVTILCIDLGTDMVPAISLAYEAAESDIMKRQPRNSQTDKLVNERLISMAYGQIGMIQALGGFFTYFVILAENGFLPSRLLGIRLDWDDRTTNDLEDSYGQEWTYEQRKVVEFTCHTAFFASIVVVQWADLIICKTRRNSVFQQGMKNKILIFGLLEETALAAFLSYCPGMGVALRMYPLKVTWWFCAFPYSLLIFIYDEVRKLILRRYPGGWVEKETYY</sequence>
<protein>
    <recommendedName>
        <fullName>Sodium/potassium-transporting ATPase subunit alpha-2</fullName>
        <shortName>Na(+)/K(+) ATPase alpha-2 subunit</shortName>
        <ecNumber>7.2.2.13</ecNumber>
    </recommendedName>
    <alternativeName>
        <fullName>Na(+)/K(+) ATPase alpha(+) subunit</fullName>
    </alternativeName>
    <alternativeName>
        <fullName>Sodium pump subunit alpha-2</fullName>
    </alternativeName>
</protein>
<comment type="function">
    <text>This is the catalytic component of the active enzyme, which catalyzes the hydrolysis of ATP coupled with the exchange of sodium and potassium ions across the plasma membrane. This action creates the electrochemical gradient of sodium and potassium ions, providing the energy for active transport of various nutrients.</text>
</comment>
<comment type="catalytic activity">
    <reaction>
        <text>K(+)(out) + Na(+)(in) + ATP + H2O = K(+)(in) + Na(+)(out) + ADP + phosphate + H(+)</text>
        <dbReference type="Rhea" id="RHEA:18353"/>
        <dbReference type="ChEBI" id="CHEBI:15377"/>
        <dbReference type="ChEBI" id="CHEBI:15378"/>
        <dbReference type="ChEBI" id="CHEBI:29101"/>
        <dbReference type="ChEBI" id="CHEBI:29103"/>
        <dbReference type="ChEBI" id="CHEBI:30616"/>
        <dbReference type="ChEBI" id="CHEBI:43474"/>
        <dbReference type="ChEBI" id="CHEBI:456216"/>
        <dbReference type="EC" id="7.2.2.13"/>
    </reaction>
</comment>
<comment type="subunit">
    <text evidence="7">The sodium/potassium-transporting ATPase is composed of a catalytic alpha subunit, an auxiliary non-catalytic beta subunit and an additional regulatory subunit. Interacts with regulatory subunit FXYD1.</text>
</comment>
<comment type="subcellular location">
    <subcellularLocation>
        <location evidence="1">Membrane</location>
        <topology evidence="1">Multi-pass membrane protein</topology>
    </subcellularLocation>
    <subcellularLocation>
        <location evidence="1">Cell membrane</location>
        <topology evidence="1">Multi-pass membrane protein</topology>
    </subcellularLocation>
</comment>
<comment type="similarity">
    <text evidence="8">Belongs to the cation transport ATPase (P-type) (TC 3.A.3) family. Type IIC subfamily.</text>
</comment>
<reference key="1">
    <citation type="journal article" date="1986" name="Biochemistry">
        <title>Molecular cloning of three distinct forms of the Na+,K+-ATPase alpha-subunit from rat brain.</title>
        <authorList>
            <person name="Shull G.E."/>
            <person name="Greeb J."/>
            <person name="Lingrel J.B."/>
        </authorList>
    </citation>
    <scope>NUCLEOTIDE SEQUENCE [MRNA]</scope>
</reference>
<reference key="2">
    <citation type="journal article" date="2004" name="Genome Res.">
        <title>The status, quality, and expansion of the NIH full-length cDNA project: the Mammalian Gene Collection (MGC).</title>
        <authorList>
            <consortium name="The MGC Project Team"/>
        </authorList>
    </citation>
    <scope>NUCLEOTIDE SEQUENCE [LARGE SCALE MRNA]</scope>
    <source>
        <tissue>Heart</tissue>
    </source>
</reference>
<reference key="3">
    <citation type="journal article" date="1990" name="Gene">
        <title>Regulation of Na+,K(+)-ATPases. I. Cloning and analysis of the 5'-flanking region of the rat NKAA2 gene encoding the alpha 2 subunit.</title>
        <authorList>
            <person name="Kawakami K."/>
            <person name="Yagawa Y."/>
            <person name="Nagano K."/>
        </authorList>
    </citation>
    <scope>NUCLEOTIDE SEQUENCE [GENOMIC DNA] OF 1-39</scope>
</reference>
<reference key="4">
    <citation type="submission" date="2007-07" db="UniProtKB">
        <authorList>
            <person name="Lubec G."/>
            <person name="Kang S.U."/>
        </authorList>
    </citation>
    <scope>PROTEIN SEQUENCE OF 594-602; 645-655; 659-668 AND 741-770</scope>
    <scope>IDENTIFICATION BY MASS SPECTROMETRY</scope>
    <source>
        <strain>Sprague-Dawley</strain>
        <tissue>Brain</tissue>
    </source>
</reference>
<reference key="5">
    <citation type="journal article" date="2012" name="Nat. Commun.">
        <title>Quantitative maps of protein phosphorylation sites across 14 different rat organs and tissues.</title>
        <authorList>
            <person name="Lundby A."/>
            <person name="Secher A."/>
            <person name="Lage K."/>
            <person name="Nordsborg N.B."/>
            <person name="Dmytriyev A."/>
            <person name="Lundby C."/>
            <person name="Olsen J.V."/>
        </authorList>
    </citation>
    <scope>PHOSPHORYLATION [LARGE SCALE ANALYSIS] AT SER-439; SER-450; SER-496 AND SER-672</scope>
    <scope>IDENTIFICATION BY MASS SPECTROMETRY [LARGE SCALE ANALYSIS]</scope>
</reference>
<reference key="6">
    <citation type="journal article" date="2013" name="J. Biol. Chem.">
        <title>A separate pool of cardiac phospholemman that does not regulate or associate with the sodium pump: multimers of phospholemman in ventricular muscle.</title>
        <authorList>
            <person name="Wypijewski K.J."/>
            <person name="Howie J."/>
            <person name="Reilly L."/>
            <person name="Tulloch L.B."/>
            <person name="Aughton K.L."/>
            <person name="McLatchie L.M."/>
            <person name="Shattock M.J."/>
            <person name="Calaghan S.C."/>
            <person name="Fuller W."/>
        </authorList>
    </citation>
    <scope>INTERACTION WITH FXYD1</scope>
</reference>
<proteinExistence type="evidence at protein level"/>
<dbReference type="EC" id="7.2.2.13"/>
<dbReference type="EMBL" id="M14512">
    <property type="protein sequence ID" value="AAA40776.1"/>
    <property type="molecule type" value="mRNA"/>
</dbReference>
<dbReference type="EMBL" id="BC085764">
    <property type="protein sequence ID" value="AAH85764.1"/>
    <property type="molecule type" value="mRNA"/>
</dbReference>
<dbReference type="EMBL" id="D90049">
    <property type="protein sequence ID" value="BAA14102.1"/>
    <property type="molecule type" value="Genomic_DNA"/>
</dbReference>
<dbReference type="PIR" id="B24639">
    <property type="entry name" value="B24639"/>
</dbReference>
<dbReference type="PIR" id="I54059">
    <property type="entry name" value="I54059"/>
</dbReference>
<dbReference type="RefSeq" id="NP_036637.1">
    <property type="nucleotide sequence ID" value="NM_012505.2"/>
</dbReference>
<dbReference type="SMR" id="P06686"/>
<dbReference type="BioGRID" id="246400">
    <property type="interactions" value="11"/>
</dbReference>
<dbReference type="CORUM" id="P06686"/>
<dbReference type="FunCoup" id="P06686">
    <property type="interactions" value="652"/>
</dbReference>
<dbReference type="IntAct" id="P06686">
    <property type="interactions" value="3"/>
</dbReference>
<dbReference type="MINT" id="P06686"/>
<dbReference type="STRING" id="10116.ENSRNOP00000054947"/>
<dbReference type="BindingDB" id="P06686"/>
<dbReference type="ChEMBL" id="CHEMBL3885640"/>
<dbReference type="ChEMBL" id="CHEMBL4106148"/>
<dbReference type="CarbonylDB" id="P06686"/>
<dbReference type="iPTMnet" id="P06686"/>
<dbReference type="PhosphoSitePlus" id="P06686"/>
<dbReference type="jPOST" id="P06686"/>
<dbReference type="PaxDb" id="10116-ENSRNOP00000054947"/>
<dbReference type="Ensembl" id="ENSRNOT00000058143.3">
    <property type="protein sequence ID" value="ENSRNOP00000054947.2"/>
    <property type="gene ID" value="ENSRNOG00000007290.7"/>
</dbReference>
<dbReference type="GeneID" id="24212"/>
<dbReference type="KEGG" id="rno:24212"/>
<dbReference type="UCSC" id="RGD:2168">
    <property type="organism name" value="rat"/>
</dbReference>
<dbReference type="AGR" id="RGD:2168"/>
<dbReference type="CTD" id="477"/>
<dbReference type="RGD" id="2168">
    <property type="gene designation" value="Atp1a2"/>
</dbReference>
<dbReference type="eggNOG" id="KOG0203">
    <property type="taxonomic scope" value="Eukaryota"/>
</dbReference>
<dbReference type="GeneTree" id="ENSGT00940000159936"/>
<dbReference type="HOGENOM" id="CLU_002360_4_1_1"/>
<dbReference type="InParanoid" id="P06686"/>
<dbReference type="OMA" id="ISWEWAL"/>
<dbReference type="OrthoDB" id="3352408at2759"/>
<dbReference type="PhylomeDB" id="P06686"/>
<dbReference type="TreeFam" id="TF312838"/>
<dbReference type="BRENDA" id="7.2.2.3">
    <property type="organism ID" value="5301"/>
</dbReference>
<dbReference type="Reactome" id="R-RNO-5578775">
    <property type="pathway name" value="Ion homeostasis"/>
</dbReference>
<dbReference type="Reactome" id="R-RNO-936837">
    <property type="pathway name" value="Ion transport by P-type ATPases"/>
</dbReference>
<dbReference type="SABIO-RK" id="P06686"/>
<dbReference type="PRO" id="PR:P06686"/>
<dbReference type="Proteomes" id="UP000002494">
    <property type="component" value="Chromosome 13"/>
</dbReference>
<dbReference type="Bgee" id="ENSRNOG00000007290">
    <property type="expression patterns" value="Expressed in Ammon's horn and 20 other cell types or tissues"/>
</dbReference>
<dbReference type="GO" id="GO:0005901">
    <property type="term" value="C:caveola"/>
    <property type="evidence" value="ECO:0000314"/>
    <property type="project" value="RGD"/>
</dbReference>
<dbReference type="GO" id="GO:0042995">
    <property type="term" value="C:cell projection"/>
    <property type="evidence" value="ECO:0000266"/>
    <property type="project" value="RGD"/>
</dbReference>
<dbReference type="GO" id="GO:0009986">
    <property type="term" value="C:cell surface"/>
    <property type="evidence" value="ECO:0000266"/>
    <property type="project" value="RGD"/>
</dbReference>
<dbReference type="GO" id="GO:0005737">
    <property type="term" value="C:cytoplasm"/>
    <property type="evidence" value="ECO:0000266"/>
    <property type="project" value="RGD"/>
</dbReference>
<dbReference type="GO" id="GO:0043197">
    <property type="term" value="C:dendritic spine"/>
    <property type="evidence" value="ECO:0000314"/>
    <property type="project" value="RGD"/>
</dbReference>
<dbReference type="GO" id="GO:0005783">
    <property type="term" value="C:endoplasmic reticulum"/>
    <property type="evidence" value="ECO:0000266"/>
    <property type="project" value="RGD"/>
</dbReference>
<dbReference type="GO" id="GO:0005768">
    <property type="term" value="C:endosome"/>
    <property type="evidence" value="ECO:0000314"/>
    <property type="project" value="RGD"/>
</dbReference>
<dbReference type="GO" id="GO:0014704">
    <property type="term" value="C:intercalated disc"/>
    <property type="evidence" value="ECO:0000314"/>
    <property type="project" value="BHF-UCL"/>
</dbReference>
<dbReference type="GO" id="GO:0016020">
    <property type="term" value="C:membrane"/>
    <property type="evidence" value="ECO:0000314"/>
    <property type="project" value="ARUK-UCL"/>
</dbReference>
<dbReference type="GO" id="GO:0043025">
    <property type="term" value="C:neuronal cell body"/>
    <property type="evidence" value="ECO:0000266"/>
    <property type="project" value="RGD"/>
</dbReference>
<dbReference type="GO" id="GO:0031090">
    <property type="term" value="C:organelle membrane"/>
    <property type="evidence" value="ECO:0000266"/>
    <property type="project" value="RGD"/>
</dbReference>
<dbReference type="GO" id="GO:0005886">
    <property type="term" value="C:plasma membrane"/>
    <property type="evidence" value="ECO:0000266"/>
    <property type="project" value="RGD"/>
</dbReference>
<dbReference type="GO" id="GO:0032991">
    <property type="term" value="C:protein-containing complex"/>
    <property type="evidence" value="ECO:0000266"/>
    <property type="project" value="RGD"/>
</dbReference>
<dbReference type="GO" id="GO:0042383">
    <property type="term" value="C:sarcolemma"/>
    <property type="evidence" value="ECO:0000314"/>
    <property type="project" value="RGD"/>
</dbReference>
<dbReference type="GO" id="GO:0005890">
    <property type="term" value="C:sodium:potassium-exchanging ATPase complex"/>
    <property type="evidence" value="ECO:0000314"/>
    <property type="project" value="ARUK-UCL"/>
</dbReference>
<dbReference type="GO" id="GO:0030315">
    <property type="term" value="C:T-tubule"/>
    <property type="evidence" value="ECO:0000314"/>
    <property type="project" value="BHF-UCL"/>
</dbReference>
<dbReference type="GO" id="GO:0005524">
    <property type="term" value="F:ATP binding"/>
    <property type="evidence" value="ECO:0000315"/>
    <property type="project" value="RGD"/>
</dbReference>
<dbReference type="GO" id="GO:0016887">
    <property type="term" value="F:ATP hydrolysis activity"/>
    <property type="evidence" value="ECO:0000266"/>
    <property type="project" value="RGD"/>
</dbReference>
<dbReference type="GO" id="GO:0019829">
    <property type="term" value="F:ATPase-coupled monoatomic cation transmembrane transporter activity"/>
    <property type="evidence" value="ECO:0000315"/>
    <property type="project" value="RGD"/>
</dbReference>
<dbReference type="GO" id="GO:0005391">
    <property type="term" value="F:P-type sodium:potassium-exchanging transporter activity"/>
    <property type="evidence" value="ECO:0000314"/>
    <property type="project" value="RGD"/>
</dbReference>
<dbReference type="GO" id="GO:0030955">
    <property type="term" value="F:potassium ion binding"/>
    <property type="evidence" value="ECO:0000266"/>
    <property type="project" value="RGD"/>
</dbReference>
<dbReference type="GO" id="GO:0046982">
    <property type="term" value="F:protein heterodimerization activity"/>
    <property type="evidence" value="ECO:0000353"/>
    <property type="project" value="ARUK-UCL"/>
</dbReference>
<dbReference type="GO" id="GO:0051087">
    <property type="term" value="F:protein-folding chaperone binding"/>
    <property type="evidence" value="ECO:0000266"/>
    <property type="project" value="RGD"/>
</dbReference>
<dbReference type="GO" id="GO:0031402">
    <property type="term" value="F:sodium ion binding"/>
    <property type="evidence" value="ECO:0000266"/>
    <property type="project" value="RGD"/>
</dbReference>
<dbReference type="GO" id="GO:0005496">
    <property type="term" value="F:steroid binding"/>
    <property type="evidence" value="ECO:0000266"/>
    <property type="project" value="RGD"/>
</dbReference>
<dbReference type="GO" id="GO:1990239">
    <property type="term" value="F:steroid hormone binding"/>
    <property type="evidence" value="ECO:0000314"/>
    <property type="project" value="BHF-UCL"/>
</dbReference>
<dbReference type="GO" id="GO:0008344">
    <property type="term" value="P:adult locomotory behavior"/>
    <property type="evidence" value="ECO:0000266"/>
    <property type="project" value="RGD"/>
</dbReference>
<dbReference type="GO" id="GO:0021764">
    <property type="term" value="P:amygdala development"/>
    <property type="evidence" value="ECO:0000266"/>
    <property type="project" value="RGD"/>
</dbReference>
<dbReference type="GO" id="GO:0046034">
    <property type="term" value="P:ATP metabolic process"/>
    <property type="evidence" value="ECO:0000266"/>
    <property type="project" value="RGD"/>
</dbReference>
<dbReference type="GO" id="GO:0001662">
    <property type="term" value="P:behavioral fear response"/>
    <property type="evidence" value="ECO:0000266"/>
    <property type="project" value="RGD"/>
</dbReference>
<dbReference type="GO" id="GO:0008015">
    <property type="term" value="P:blood circulation"/>
    <property type="evidence" value="ECO:0000266"/>
    <property type="project" value="RGD"/>
</dbReference>
<dbReference type="GO" id="GO:0060048">
    <property type="term" value="P:cardiac muscle contraction"/>
    <property type="evidence" value="ECO:0000305"/>
    <property type="project" value="BHF-UCL"/>
</dbReference>
<dbReference type="GO" id="GO:0071260">
    <property type="term" value="P:cellular response to mechanical stimulus"/>
    <property type="evidence" value="ECO:0000314"/>
    <property type="project" value="RGD"/>
</dbReference>
<dbReference type="GO" id="GO:0071383">
    <property type="term" value="P:cellular response to steroid hormone stimulus"/>
    <property type="evidence" value="ECO:0000315"/>
    <property type="project" value="BHF-UCL"/>
</dbReference>
<dbReference type="GO" id="GO:0015988">
    <property type="term" value="P:energy coupled proton transmembrane transport, against electrochemical gradient"/>
    <property type="evidence" value="ECO:0000304"/>
    <property type="project" value="RGD"/>
</dbReference>
<dbReference type="GO" id="GO:0042596">
    <property type="term" value="P:fear response"/>
    <property type="evidence" value="ECO:0000266"/>
    <property type="project" value="RGD"/>
</dbReference>
<dbReference type="GO" id="GO:0030007">
    <property type="term" value="P:intracellular potassium ion homeostasis"/>
    <property type="evidence" value="ECO:0000266"/>
    <property type="project" value="RGD"/>
</dbReference>
<dbReference type="GO" id="GO:0006883">
    <property type="term" value="P:intracellular sodium ion homeostasis"/>
    <property type="evidence" value="ECO:0000266"/>
    <property type="project" value="RGD"/>
</dbReference>
<dbReference type="GO" id="GO:0019852">
    <property type="term" value="P:L-ascorbic acid metabolic process"/>
    <property type="evidence" value="ECO:0000266"/>
    <property type="project" value="RGD"/>
</dbReference>
<dbReference type="GO" id="GO:0040011">
    <property type="term" value="P:locomotion"/>
    <property type="evidence" value="ECO:0000266"/>
    <property type="project" value="RGD"/>
</dbReference>
<dbReference type="GO" id="GO:0035641">
    <property type="term" value="P:locomotory exploration behavior"/>
    <property type="evidence" value="ECO:0000266"/>
    <property type="project" value="RGD"/>
</dbReference>
<dbReference type="GO" id="GO:0051899">
    <property type="term" value="P:membrane depolarization"/>
    <property type="evidence" value="ECO:0000266"/>
    <property type="project" value="RGD"/>
</dbReference>
<dbReference type="GO" id="GO:0098655">
    <property type="term" value="P:monoatomic cation transmembrane transport"/>
    <property type="evidence" value="ECO:0000266"/>
    <property type="project" value="RGD"/>
</dbReference>
<dbReference type="GO" id="GO:1903170">
    <property type="term" value="P:negative regulation of calcium ion transmembrane transport"/>
    <property type="evidence" value="ECO:0000315"/>
    <property type="project" value="BHF-UCL"/>
</dbReference>
<dbReference type="GO" id="GO:0051481">
    <property type="term" value="P:negative regulation of cytosolic calcium ion concentration"/>
    <property type="evidence" value="ECO:0000266"/>
    <property type="project" value="RGD"/>
</dbReference>
<dbReference type="GO" id="GO:0045822">
    <property type="term" value="P:negative regulation of heart contraction"/>
    <property type="evidence" value="ECO:0000266"/>
    <property type="project" value="RGD"/>
</dbReference>
<dbReference type="GO" id="GO:0045988">
    <property type="term" value="P:negative regulation of striated muscle contraction"/>
    <property type="evidence" value="ECO:0000266"/>
    <property type="project" value="RGD"/>
</dbReference>
<dbReference type="GO" id="GO:0019227">
    <property type="term" value="P:neuronal action potential propagation"/>
    <property type="evidence" value="ECO:0000266"/>
    <property type="project" value="RGD"/>
</dbReference>
<dbReference type="GO" id="GO:0001504">
    <property type="term" value="P:neurotransmitter uptake"/>
    <property type="evidence" value="ECO:0000266"/>
    <property type="project" value="RGD"/>
</dbReference>
<dbReference type="GO" id="GO:0021989">
    <property type="term" value="P:olfactory cortex development"/>
    <property type="evidence" value="ECO:0000266"/>
    <property type="project" value="RGD"/>
</dbReference>
<dbReference type="GO" id="GO:1990573">
    <property type="term" value="P:potassium ion import across plasma membrane"/>
    <property type="evidence" value="ECO:0000266"/>
    <property type="project" value="RGD"/>
</dbReference>
<dbReference type="GO" id="GO:0071805">
    <property type="term" value="P:potassium ion transmembrane transport"/>
    <property type="evidence" value="ECO:0000266"/>
    <property type="project" value="RGD"/>
</dbReference>
<dbReference type="GO" id="GO:0006813">
    <property type="term" value="P:potassium ion transport"/>
    <property type="evidence" value="ECO:0000314"/>
    <property type="project" value="RGD"/>
</dbReference>
<dbReference type="GO" id="GO:1902600">
    <property type="term" value="P:proton transmembrane transport"/>
    <property type="evidence" value="ECO:0000315"/>
    <property type="project" value="RGD"/>
</dbReference>
<dbReference type="GO" id="GO:0008217">
    <property type="term" value="P:regulation of blood pressure"/>
    <property type="evidence" value="ECO:0000266"/>
    <property type="project" value="RGD"/>
</dbReference>
<dbReference type="GO" id="GO:0086004">
    <property type="term" value="P:regulation of cardiac muscle cell contraction"/>
    <property type="evidence" value="ECO:0000315"/>
    <property type="project" value="RGD"/>
</dbReference>
<dbReference type="GO" id="GO:0010882">
    <property type="term" value="P:regulation of cardiac muscle contraction by calcium ion signaling"/>
    <property type="evidence" value="ECO:0000305"/>
    <property type="project" value="BHF-UCL"/>
</dbReference>
<dbReference type="GO" id="GO:0006937">
    <property type="term" value="P:regulation of muscle contraction"/>
    <property type="evidence" value="ECO:0000266"/>
    <property type="project" value="RGD"/>
</dbReference>
<dbReference type="GO" id="GO:0002087">
    <property type="term" value="P:regulation of respiratory gaseous exchange by nervous system process"/>
    <property type="evidence" value="ECO:0000266"/>
    <property type="project" value="RGD"/>
</dbReference>
<dbReference type="GO" id="GO:0006940">
    <property type="term" value="P:regulation of smooth muscle contraction"/>
    <property type="evidence" value="ECO:0000266"/>
    <property type="project" value="RGD"/>
</dbReference>
<dbReference type="GO" id="GO:0006942">
    <property type="term" value="P:regulation of striated muscle contraction"/>
    <property type="evidence" value="ECO:0000266"/>
    <property type="project" value="RGD"/>
</dbReference>
<dbReference type="GO" id="GO:0002026">
    <property type="term" value="P:regulation of the force of heart contraction"/>
    <property type="evidence" value="ECO:0000266"/>
    <property type="project" value="RGD"/>
</dbReference>
<dbReference type="GO" id="GO:0019229">
    <property type="term" value="P:regulation of vasoconstriction"/>
    <property type="evidence" value="ECO:0000266"/>
    <property type="project" value="RGD"/>
</dbReference>
<dbReference type="GO" id="GO:0055119">
    <property type="term" value="P:relaxation of cardiac muscle"/>
    <property type="evidence" value="ECO:0000305"/>
    <property type="project" value="BHF-UCL"/>
</dbReference>
<dbReference type="GO" id="GO:0010996">
    <property type="term" value="P:response to auditory stimulus"/>
    <property type="evidence" value="ECO:0000266"/>
    <property type="project" value="RGD"/>
</dbReference>
<dbReference type="GO" id="GO:1903416">
    <property type="term" value="P:response to glycoside"/>
    <property type="evidence" value="ECO:0000315"/>
    <property type="project" value="BHF-UCL"/>
</dbReference>
<dbReference type="GO" id="GO:0035094">
    <property type="term" value="P:response to nicotine"/>
    <property type="evidence" value="ECO:0000314"/>
    <property type="project" value="RGD"/>
</dbReference>
<dbReference type="GO" id="GO:0035864">
    <property type="term" value="P:response to potassium ion"/>
    <property type="evidence" value="ECO:0000266"/>
    <property type="project" value="RGD"/>
</dbReference>
<dbReference type="GO" id="GO:0036376">
    <property type="term" value="P:sodium ion export across plasma membrane"/>
    <property type="evidence" value="ECO:0000266"/>
    <property type="project" value="RGD"/>
</dbReference>
<dbReference type="GO" id="GO:0035725">
    <property type="term" value="P:sodium ion transmembrane transport"/>
    <property type="evidence" value="ECO:0000266"/>
    <property type="project" value="RGD"/>
</dbReference>
<dbReference type="GO" id="GO:0006814">
    <property type="term" value="P:sodium ion transport"/>
    <property type="evidence" value="ECO:0000314"/>
    <property type="project" value="RGD"/>
</dbReference>
<dbReference type="GO" id="GO:0008542">
    <property type="term" value="P:visual learning"/>
    <property type="evidence" value="ECO:0000266"/>
    <property type="project" value="RGD"/>
</dbReference>
<dbReference type="CDD" id="cd02608">
    <property type="entry name" value="P-type_ATPase_Na-K_like"/>
    <property type="match status" value="1"/>
</dbReference>
<dbReference type="FunFam" id="2.70.150.10:FF:000142">
    <property type="entry name" value="Na/K ATPase alpha 2 subunit"/>
    <property type="match status" value="1"/>
</dbReference>
<dbReference type="FunFam" id="2.70.150.10:FF:000106">
    <property type="entry name" value="Sodium/potassium-transporting ATPase subunit alpha"/>
    <property type="match status" value="1"/>
</dbReference>
<dbReference type="FunFam" id="3.40.1110.10:FF:000001">
    <property type="entry name" value="Sodium/potassium-transporting ATPase subunit alpha"/>
    <property type="match status" value="1"/>
</dbReference>
<dbReference type="FunFam" id="3.40.50.1000:FF:000004">
    <property type="entry name" value="Sodium/potassium-transporting ATPase subunit alpha"/>
    <property type="match status" value="1"/>
</dbReference>
<dbReference type="FunFam" id="1.20.1110.10:FF:000095">
    <property type="entry name" value="Sodium/potassium-transporting ATPase subunit alpha-1"/>
    <property type="match status" value="2"/>
</dbReference>
<dbReference type="Gene3D" id="3.40.1110.10">
    <property type="entry name" value="Calcium-transporting ATPase, cytoplasmic domain N"/>
    <property type="match status" value="1"/>
</dbReference>
<dbReference type="Gene3D" id="2.70.150.10">
    <property type="entry name" value="Calcium-transporting ATPase, cytoplasmic transduction domain A"/>
    <property type="match status" value="1"/>
</dbReference>
<dbReference type="Gene3D" id="1.20.1110.10">
    <property type="entry name" value="Calcium-transporting ATPase, transmembrane domain"/>
    <property type="match status" value="1"/>
</dbReference>
<dbReference type="Gene3D" id="3.40.50.1000">
    <property type="entry name" value="HAD superfamily/HAD-like"/>
    <property type="match status" value="1"/>
</dbReference>
<dbReference type="InterPro" id="IPR006068">
    <property type="entry name" value="ATPase_P-typ_cation-transptr_C"/>
</dbReference>
<dbReference type="InterPro" id="IPR004014">
    <property type="entry name" value="ATPase_P-typ_cation-transptr_N"/>
</dbReference>
<dbReference type="InterPro" id="IPR023299">
    <property type="entry name" value="ATPase_P-typ_cyto_dom_N"/>
</dbReference>
<dbReference type="InterPro" id="IPR018303">
    <property type="entry name" value="ATPase_P-typ_P_site"/>
</dbReference>
<dbReference type="InterPro" id="IPR023298">
    <property type="entry name" value="ATPase_P-typ_TM_dom_sf"/>
</dbReference>
<dbReference type="InterPro" id="IPR008250">
    <property type="entry name" value="ATPase_P-typ_transduc_dom_A_sf"/>
</dbReference>
<dbReference type="InterPro" id="IPR050510">
    <property type="entry name" value="Cation_transp_ATPase_P-type"/>
</dbReference>
<dbReference type="InterPro" id="IPR036412">
    <property type="entry name" value="HAD-like_sf"/>
</dbReference>
<dbReference type="InterPro" id="IPR023214">
    <property type="entry name" value="HAD_sf"/>
</dbReference>
<dbReference type="InterPro" id="IPR005775">
    <property type="entry name" value="P-type_ATPase_IIC"/>
</dbReference>
<dbReference type="InterPro" id="IPR001757">
    <property type="entry name" value="P_typ_ATPase"/>
</dbReference>
<dbReference type="InterPro" id="IPR044492">
    <property type="entry name" value="P_typ_ATPase_HD_dom"/>
</dbReference>
<dbReference type="NCBIfam" id="TIGR01106">
    <property type="entry name" value="ATPase-IIC_X-K"/>
    <property type="match status" value="1"/>
</dbReference>
<dbReference type="NCBIfam" id="TIGR01494">
    <property type="entry name" value="ATPase_P-type"/>
    <property type="match status" value="2"/>
</dbReference>
<dbReference type="PANTHER" id="PTHR43294">
    <property type="entry name" value="SODIUM/POTASSIUM-TRANSPORTING ATPASE SUBUNIT ALPHA"/>
    <property type="match status" value="1"/>
</dbReference>
<dbReference type="PANTHER" id="PTHR43294:SF6">
    <property type="entry name" value="SODIUM_POTASSIUM-TRANSPORTING ATPASE SUBUNIT ALPHA-2"/>
    <property type="match status" value="1"/>
</dbReference>
<dbReference type="Pfam" id="PF13246">
    <property type="entry name" value="Cation_ATPase"/>
    <property type="match status" value="1"/>
</dbReference>
<dbReference type="Pfam" id="PF00689">
    <property type="entry name" value="Cation_ATPase_C"/>
    <property type="match status" value="1"/>
</dbReference>
<dbReference type="Pfam" id="PF00690">
    <property type="entry name" value="Cation_ATPase_N"/>
    <property type="match status" value="1"/>
</dbReference>
<dbReference type="Pfam" id="PF00122">
    <property type="entry name" value="E1-E2_ATPase"/>
    <property type="match status" value="1"/>
</dbReference>
<dbReference type="Pfam" id="PF00702">
    <property type="entry name" value="Hydrolase"/>
    <property type="match status" value="1"/>
</dbReference>
<dbReference type="PRINTS" id="PR00119">
    <property type="entry name" value="CATATPASE"/>
</dbReference>
<dbReference type="PRINTS" id="PR00121">
    <property type="entry name" value="NAKATPASE"/>
</dbReference>
<dbReference type="SFLD" id="SFLDG00002">
    <property type="entry name" value="C1.7:_P-type_atpase_like"/>
    <property type="match status" value="1"/>
</dbReference>
<dbReference type="SFLD" id="SFLDF00027">
    <property type="entry name" value="p-type_atpase"/>
    <property type="match status" value="1"/>
</dbReference>
<dbReference type="SMART" id="SM00831">
    <property type="entry name" value="Cation_ATPase_N"/>
    <property type="match status" value="1"/>
</dbReference>
<dbReference type="SUPFAM" id="SSF81653">
    <property type="entry name" value="Calcium ATPase, transduction domain A"/>
    <property type="match status" value="1"/>
</dbReference>
<dbReference type="SUPFAM" id="SSF81665">
    <property type="entry name" value="Calcium ATPase, transmembrane domain M"/>
    <property type="match status" value="1"/>
</dbReference>
<dbReference type="SUPFAM" id="SSF56784">
    <property type="entry name" value="HAD-like"/>
    <property type="match status" value="1"/>
</dbReference>
<dbReference type="SUPFAM" id="SSF81660">
    <property type="entry name" value="Metal cation-transporting ATPase, ATP-binding domain N"/>
    <property type="match status" value="1"/>
</dbReference>
<dbReference type="PROSITE" id="PS00154">
    <property type="entry name" value="ATPASE_E1_E2"/>
    <property type="match status" value="1"/>
</dbReference>
<organism>
    <name type="scientific">Rattus norvegicus</name>
    <name type="common">Rat</name>
    <dbReference type="NCBI Taxonomy" id="10116"/>
    <lineage>
        <taxon>Eukaryota</taxon>
        <taxon>Metazoa</taxon>
        <taxon>Chordata</taxon>
        <taxon>Craniata</taxon>
        <taxon>Vertebrata</taxon>
        <taxon>Euteleostomi</taxon>
        <taxon>Mammalia</taxon>
        <taxon>Eutheria</taxon>
        <taxon>Euarchontoglires</taxon>
        <taxon>Glires</taxon>
        <taxon>Rodentia</taxon>
        <taxon>Myomorpha</taxon>
        <taxon>Muroidea</taxon>
        <taxon>Muridae</taxon>
        <taxon>Murinae</taxon>
        <taxon>Rattus</taxon>
    </lineage>
</organism>
<accession>P06686</accession>
<evidence type="ECO:0000250" key="1"/>
<evidence type="ECO:0000250" key="2">
    <source>
        <dbReference type="UniProtKB" id="P09626"/>
    </source>
</evidence>
<evidence type="ECO:0000250" key="3">
    <source>
        <dbReference type="UniProtKB" id="P50993"/>
    </source>
</evidence>
<evidence type="ECO:0000250" key="4">
    <source>
        <dbReference type="UniProtKB" id="Q6PIE5"/>
    </source>
</evidence>
<evidence type="ECO:0000255" key="5"/>
<evidence type="ECO:0000256" key="6">
    <source>
        <dbReference type="SAM" id="MobiDB-lite"/>
    </source>
</evidence>
<evidence type="ECO:0000269" key="7">
    <source>
    </source>
</evidence>
<evidence type="ECO:0000305" key="8"/>
<evidence type="ECO:0007744" key="9">
    <source>
    </source>
</evidence>
<feature type="propeptide" id="PRO_0000002507">
    <location>
        <begin position="1"/>
        <end position="5"/>
    </location>
</feature>
<feature type="chain" id="PRO_0000002508" description="Sodium/potassium-transporting ATPase subunit alpha-2">
    <location>
        <begin position="6"/>
        <end position="1020"/>
    </location>
</feature>
<feature type="topological domain" description="Cytoplasmic" evidence="5">
    <location>
        <begin position="6"/>
        <end position="85"/>
    </location>
</feature>
<feature type="transmembrane region" description="Helical" evidence="5">
    <location>
        <begin position="86"/>
        <end position="106"/>
    </location>
</feature>
<feature type="topological domain" description="Extracellular" evidence="5">
    <location>
        <begin position="107"/>
        <end position="129"/>
    </location>
</feature>
<feature type="transmembrane region" description="Helical" evidence="5">
    <location>
        <begin position="130"/>
        <end position="150"/>
    </location>
</feature>
<feature type="topological domain" description="Cytoplasmic" evidence="5">
    <location>
        <begin position="151"/>
        <end position="286"/>
    </location>
</feature>
<feature type="transmembrane region" description="Helical" evidence="5">
    <location>
        <begin position="287"/>
        <end position="306"/>
    </location>
</feature>
<feature type="topological domain" description="Extracellular" evidence="5">
    <location>
        <begin position="307"/>
        <end position="318"/>
    </location>
</feature>
<feature type="transmembrane region" description="Helical" evidence="5">
    <location>
        <begin position="319"/>
        <end position="336"/>
    </location>
</feature>
<feature type="topological domain" description="Cytoplasmic" evidence="5">
    <location>
        <begin position="337"/>
        <end position="769"/>
    </location>
</feature>
<feature type="transmembrane region" description="Helical" evidence="5">
    <location>
        <begin position="770"/>
        <end position="789"/>
    </location>
</feature>
<feature type="topological domain" description="Extracellular" evidence="5">
    <location>
        <begin position="790"/>
        <end position="799"/>
    </location>
</feature>
<feature type="transmembrane region" description="Helical" evidence="5">
    <location>
        <begin position="800"/>
        <end position="820"/>
    </location>
</feature>
<feature type="topological domain" description="Cytoplasmic" evidence="5">
    <location>
        <begin position="821"/>
        <end position="840"/>
    </location>
</feature>
<feature type="transmembrane region" description="Helical" evidence="5">
    <location>
        <begin position="841"/>
        <end position="863"/>
    </location>
</feature>
<feature type="topological domain" description="Extracellular" evidence="5">
    <location>
        <begin position="864"/>
        <end position="915"/>
    </location>
</feature>
<feature type="transmembrane region" description="Helical" evidence="5">
    <location>
        <begin position="916"/>
        <end position="935"/>
    </location>
</feature>
<feature type="topological domain" description="Cytoplasmic" evidence="5">
    <location>
        <begin position="936"/>
        <end position="948"/>
    </location>
</feature>
<feature type="transmembrane region" description="Helical" evidence="5">
    <location>
        <begin position="949"/>
        <end position="967"/>
    </location>
</feature>
<feature type="topological domain" description="Extracellular" evidence="5">
    <location>
        <begin position="968"/>
        <end position="982"/>
    </location>
</feature>
<feature type="transmembrane region" description="Helical" evidence="5">
    <location>
        <begin position="983"/>
        <end position="1003"/>
    </location>
</feature>
<feature type="topological domain" description="Cytoplasmic" evidence="5">
    <location>
        <begin position="1004"/>
        <end position="1020"/>
    </location>
</feature>
<feature type="region of interest" description="Disordered" evidence="6">
    <location>
        <begin position="1"/>
        <end position="31"/>
    </location>
</feature>
<feature type="region of interest" description="Interaction with phosphoinositide-3 kinase" evidence="1">
    <location>
        <begin position="80"/>
        <end position="82"/>
    </location>
</feature>
<feature type="region of interest" description="Disordered" evidence="6">
    <location>
        <begin position="212"/>
        <end position="231"/>
    </location>
</feature>
<feature type="compositionally biased region" description="Polar residues" evidence="6">
    <location>
        <begin position="212"/>
        <end position="227"/>
    </location>
</feature>
<feature type="active site" description="4-aspartylphosphate intermediate" evidence="1">
    <location>
        <position position="374"/>
    </location>
</feature>
<feature type="binding site" evidence="1">
    <location>
        <position position="714"/>
    </location>
    <ligand>
        <name>Mg(2+)</name>
        <dbReference type="ChEBI" id="CHEBI:18420"/>
    </ligand>
</feature>
<feature type="binding site" evidence="1">
    <location>
        <position position="718"/>
    </location>
    <ligand>
        <name>Mg(2+)</name>
        <dbReference type="ChEBI" id="CHEBI:18420"/>
    </ligand>
</feature>
<feature type="modified residue" description="Phosphoserine" evidence="4">
    <location>
        <position position="10"/>
    </location>
</feature>
<feature type="modified residue" description="Phosphoserine" evidence="9">
    <location>
        <position position="439"/>
    </location>
</feature>
<feature type="modified residue" description="Phosphoserine" evidence="9">
    <location>
        <position position="450"/>
    </location>
</feature>
<feature type="modified residue" description="Phosphoserine" evidence="9">
    <location>
        <position position="496"/>
    </location>
</feature>
<feature type="modified residue" description="Phosphoserine" evidence="4">
    <location>
        <position position="559"/>
    </location>
</feature>
<feature type="modified residue" description="Phosphothreonine" evidence="3">
    <location>
        <position position="570"/>
    </location>
</feature>
<feature type="modified residue" description="Phosphoserine" evidence="3">
    <location>
        <position position="587"/>
    </location>
</feature>
<feature type="modified residue" description="Phosphoserine" evidence="9">
    <location>
        <position position="672"/>
    </location>
</feature>
<feature type="modified residue" description="Phosphoserine" evidence="2">
    <location>
        <position position="826"/>
    </location>
</feature>
<feature type="modified residue" description="Phosphoserine; by PKA" evidence="1">
    <location>
        <position position="940"/>
    </location>
</feature>
<keyword id="KW-0067">ATP-binding</keyword>
<keyword id="KW-1003">Cell membrane</keyword>
<keyword id="KW-0903">Direct protein sequencing</keyword>
<keyword id="KW-0406">Ion transport</keyword>
<keyword id="KW-0460">Magnesium</keyword>
<keyword id="KW-0472">Membrane</keyword>
<keyword id="KW-0479">Metal-binding</keyword>
<keyword id="KW-0547">Nucleotide-binding</keyword>
<keyword id="KW-0597">Phosphoprotein</keyword>
<keyword id="KW-0630">Potassium</keyword>
<keyword id="KW-0633">Potassium transport</keyword>
<keyword id="KW-1185">Reference proteome</keyword>
<keyword id="KW-0915">Sodium</keyword>
<keyword id="KW-0739">Sodium transport</keyword>
<keyword id="KW-0740">Sodium/potassium transport</keyword>
<keyword id="KW-1278">Translocase</keyword>
<keyword id="KW-0812">Transmembrane</keyword>
<keyword id="KW-1133">Transmembrane helix</keyword>
<keyword id="KW-0813">Transport</keyword>